<dbReference type="EMBL" id="CP000697">
    <property type="protein sequence ID" value="ABQ30850.1"/>
    <property type="molecule type" value="Genomic_DNA"/>
</dbReference>
<dbReference type="RefSeq" id="WP_007421612.1">
    <property type="nucleotide sequence ID" value="NC_009484.1"/>
</dbReference>
<dbReference type="SMR" id="A5FZ18"/>
<dbReference type="STRING" id="349163.Acry_1645"/>
<dbReference type="KEGG" id="acr:Acry_1645"/>
<dbReference type="eggNOG" id="COG0484">
    <property type="taxonomic scope" value="Bacteria"/>
</dbReference>
<dbReference type="HOGENOM" id="CLU_017633_0_7_5"/>
<dbReference type="Proteomes" id="UP000000245">
    <property type="component" value="Chromosome"/>
</dbReference>
<dbReference type="GO" id="GO:0005737">
    <property type="term" value="C:cytoplasm"/>
    <property type="evidence" value="ECO:0007669"/>
    <property type="project" value="UniProtKB-SubCell"/>
</dbReference>
<dbReference type="GO" id="GO:0005524">
    <property type="term" value="F:ATP binding"/>
    <property type="evidence" value="ECO:0007669"/>
    <property type="project" value="InterPro"/>
</dbReference>
<dbReference type="GO" id="GO:0031072">
    <property type="term" value="F:heat shock protein binding"/>
    <property type="evidence" value="ECO:0007669"/>
    <property type="project" value="InterPro"/>
</dbReference>
<dbReference type="GO" id="GO:0051082">
    <property type="term" value="F:unfolded protein binding"/>
    <property type="evidence" value="ECO:0007669"/>
    <property type="project" value="UniProtKB-UniRule"/>
</dbReference>
<dbReference type="GO" id="GO:0008270">
    <property type="term" value="F:zinc ion binding"/>
    <property type="evidence" value="ECO:0007669"/>
    <property type="project" value="UniProtKB-UniRule"/>
</dbReference>
<dbReference type="GO" id="GO:0051085">
    <property type="term" value="P:chaperone cofactor-dependent protein refolding"/>
    <property type="evidence" value="ECO:0007669"/>
    <property type="project" value="TreeGrafter"/>
</dbReference>
<dbReference type="GO" id="GO:0006260">
    <property type="term" value="P:DNA replication"/>
    <property type="evidence" value="ECO:0007669"/>
    <property type="project" value="UniProtKB-KW"/>
</dbReference>
<dbReference type="GO" id="GO:0042026">
    <property type="term" value="P:protein refolding"/>
    <property type="evidence" value="ECO:0007669"/>
    <property type="project" value="TreeGrafter"/>
</dbReference>
<dbReference type="GO" id="GO:0009408">
    <property type="term" value="P:response to heat"/>
    <property type="evidence" value="ECO:0007669"/>
    <property type="project" value="InterPro"/>
</dbReference>
<dbReference type="CDD" id="cd06257">
    <property type="entry name" value="DnaJ"/>
    <property type="match status" value="1"/>
</dbReference>
<dbReference type="CDD" id="cd10747">
    <property type="entry name" value="DnaJ_C"/>
    <property type="match status" value="1"/>
</dbReference>
<dbReference type="CDD" id="cd10719">
    <property type="entry name" value="DnaJ_zf"/>
    <property type="match status" value="1"/>
</dbReference>
<dbReference type="FunFam" id="1.10.287.110:FF:000034">
    <property type="entry name" value="Chaperone protein DnaJ"/>
    <property type="match status" value="1"/>
</dbReference>
<dbReference type="FunFam" id="2.60.260.20:FF:000004">
    <property type="entry name" value="Molecular chaperone DnaJ"/>
    <property type="match status" value="1"/>
</dbReference>
<dbReference type="Gene3D" id="6.20.20.10">
    <property type="match status" value="2"/>
</dbReference>
<dbReference type="Gene3D" id="1.10.287.110">
    <property type="entry name" value="DnaJ domain"/>
    <property type="match status" value="1"/>
</dbReference>
<dbReference type="Gene3D" id="2.60.260.20">
    <property type="entry name" value="Urease metallochaperone UreE, N-terminal domain"/>
    <property type="match status" value="2"/>
</dbReference>
<dbReference type="HAMAP" id="MF_01152">
    <property type="entry name" value="DnaJ"/>
    <property type="match status" value="1"/>
</dbReference>
<dbReference type="InterPro" id="IPR012724">
    <property type="entry name" value="DnaJ"/>
</dbReference>
<dbReference type="InterPro" id="IPR002939">
    <property type="entry name" value="DnaJ_C"/>
</dbReference>
<dbReference type="InterPro" id="IPR001623">
    <property type="entry name" value="DnaJ_domain"/>
</dbReference>
<dbReference type="InterPro" id="IPR018253">
    <property type="entry name" value="DnaJ_domain_CS"/>
</dbReference>
<dbReference type="InterPro" id="IPR008971">
    <property type="entry name" value="HSP40/DnaJ_pept-bd"/>
</dbReference>
<dbReference type="InterPro" id="IPR001305">
    <property type="entry name" value="HSP_DnaJ_Cys-rich_dom"/>
</dbReference>
<dbReference type="InterPro" id="IPR036410">
    <property type="entry name" value="HSP_DnaJ_Cys-rich_dom_sf"/>
</dbReference>
<dbReference type="InterPro" id="IPR036869">
    <property type="entry name" value="J_dom_sf"/>
</dbReference>
<dbReference type="NCBIfam" id="TIGR02349">
    <property type="entry name" value="DnaJ_bact"/>
    <property type="match status" value="1"/>
</dbReference>
<dbReference type="NCBIfam" id="NF008035">
    <property type="entry name" value="PRK10767.1"/>
    <property type="match status" value="1"/>
</dbReference>
<dbReference type="PANTHER" id="PTHR43096:SF48">
    <property type="entry name" value="CHAPERONE PROTEIN DNAJ"/>
    <property type="match status" value="1"/>
</dbReference>
<dbReference type="PANTHER" id="PTHR43096">
    <property type="entry name" value="DNAJ HOMOLOG 1, MITOCHONDRIAL-RELATED"/>
    <property type="match status" value="1"/>
</dbReference>
<dbReference type="Pfam" id="PF00226">
    <property type="entry name" value="DnaJ"/>
    <property type="match status" value="1"/>
</dbReference>
<dbReference type="Pfam" id="PF01556">
    <property type="entry name" value="DnaJ_C"/>
    <property type="match status" value="1"/>
</dbReference>
<dbReference type="Pfam" id="PF00684">
    <property type="entry name" value="DnaJ_CXXCXGXG"/>
    <property type="match status" value="1"/>
</dbReference>
<dbReference type="PRINTS" id="PR00625">
    <property type="entry name" value="JDOMAIN"/>
</dbReference>
<dbReference type="SMART" id="SM00271">
    <property type="entry name" value="DnaJ"/>
    <property type="match status" value="1"/>
</dbReference>
<dbReference type="SUPFAM" id="SSF46565">
    <property type="entry name" value="Chaperone J-domain"/>
    <property type="match status" value="1"/>
</dbReference>
<dbReference type="SUPFAM" id="SSF57938">
    <property type="entry name" value="DnaJ/Hsp40 cysteine-rich domain"/>
    <property type="match status" value="1"/>
</dbReference>
<dbReference type="SUPFAM" id="SSF49493">
    <property type="entry name" value="HSP40/DnaJ peptide-binding domain"/>
    <property type="match status" value="2"/>
</dbReference>
<dbReference type="PROSITE" id="PS00636">
    <property type="entry name" value="DNAJ_1"/>
    <property type="match status" value="1"/>
</dbReference>
<dbReference type="PROSITE" id="PS50076">
    <property type="entry name" value="DNAJ_2"/>
    <property type="match status" value="1"/>
</dbReference>
<dbReference type="PROSITE" id="PS51188">
    <property type="entry name" value="ZF_CR"/>
    <property type="match status" value="1"/>
</dbReference>
<comment type="function">
    <text evidence="1">Participates actively in the response to hyperosmotic and heat shock by preventing the aggregation of stress-denatured proteins and by disaggregating proteins, also in an autonomous, DnaK-independent fashion. Unfolded proteins bind initially to DnaJ; upon interaction with the DnaJ-bound protein, DnaK hydrolyzes its bound ATP, resulting in the formation of a stable complex. GrpE releases ADP from DnaK; ATP binding to DnaK triggers the release of the substrate protein, thus completing the reaction cycle. Several rounds of ATP-dependent interactions between DnaJ, DnaK and GrpE are required for fully efficient folding. Also involved, together with DnaK and GrpE, in the DNA replication of plasmids through activation of initiation proteins.</text>
</comment>
<comment type="cofactor">
    <cofactor evidence="1">
        <name>Zn(2+)</name>
        <dbReference type="ChEBI" id="CHEBI:29105"/>
    </cofactor>
    <text evidence="1">Binds 2 Zn(2+) ions per monomer.</text>
</comment>
<comment type="subunit">
    <text evidence="1">Homodimer.</text>
</comment>
<comment type="subcellular location">
    <subcellularLocation>
        <location evidence="1">Cytoplasm</location>
    </subcellularLocation>
</comment>
<comment type="domain">
    <text evidence="1">The J domain is necessary and sufficient to stimulate DnaK ATPase activity. Zinc center 1 plays an important role in the autonomous, DnaK-independent chaperone activity of DnaJ. Zinc center 2 is essential for interaction with DnaK and for DnaJ activity.</text>
</comment>
<comment type="similarity">
    <text evidence="1">Belongs to the DnaJ family.</text>
</comment>
<evidence type="ECO:0000255" key="1">
    <source>
        <dbReference type="HAMAP-Rule" id="MF_01152"/>
    </source>
</evidence>
<protein>
    <recommendedName>
        <fullName evidence="1">Chaperone protein DnaJ</fullName>
    </recommendedName>
</protein>
<sequence length="383" mass="40693">MAKTDYYELLGVSRGASADELKKAYRKLAMQYHPDRNPGDAAAEQKFKDINEAYDVLKDEQKRAAYDRFGHAAFENGGGPGAGGFGGGFGGFGGFEGGIGDIFEQMFGEAMGGRRGGRTERAGADLRAAVEIDLTQAFTGTKTEIRVPTRVSCDACSGTGSADKSAANDTCPTCGGAGRVRAQQGFFVVERTCPTCGGAGRTVRNPCRVCSGAGTVPRERTLSVTIPAGVEDGTRIRLSGEGEAGGRGASPGDLYVHVSIRPHPIFQRDGANVFCRVPLRMAQAALGGEIEVPAIDGTRARVKIPAGTQTGDQFRLRGKGFSVLRSTARGDMYIQVAVETPQNLTKRQRELLEEFEREAGNTASGSPEHEGFFAKVKEFFDGL</sequence>
<reference key="1">
    <citation type="submission" date="2007-05" db="EMBL/GenBank/DDBJ databases">
        <title>Complete sequence of chromosome of Acidiphilium cryptum JF-5.</title>
        <authorList>
            <consortium name="US DOE Joint Genome Institute"/>
            <person name="Copeland A."/>
            <person name="Lucas S."/>
            <person name="Lapidus A."/>
            <person name="Barry K."/>
            <person name="Detter J.C."/>
            <person name="Glavina del Rio T."/>
            <person name="Hammon N."/>
            <person name="Israni S."/>
            <person name="Dalin E."/>
            <person name="Tice H."/>
            <person name="Pitluck S."/>
            <person name="Sims D."/>
            <person name="Brettin T."/>
            <person name="Bruce D."/>
            <person name="Han C."/>
            <person name="Schmutz J."/>
            <person name="Larimer F."/>
            <person name="Land M."/>
            <person name="Hauser L."/>
            <person name="Kyrpides N."/>
            <person name="Kim E."/>
            <person name="Magnuson T."/>
            <person name="Richardson P."/>
        </authorList>
    </citation>
    <scope>NUCLEOTIDE SEQUENCE [LARGE SCALE GENOMIC DNA]</scope>
    <source>
        <strain>JF-5</strain>
    </source>
</reference>
<keyword id="KW-0143">Chaperone</keyword>
<keyword id="KW-0963">Cytoplasm</keyword>
<keyword id="KW-0235">DNA replication</keyword>
<keyword id="KW-0479">Metal-binding</keyword>
<keyword id="KW-1185">Reference proteome</keyword>
<keyword id="KW-0677">Repeat</keyword>
<keyword id="KW-0346">Stress response</keyword>
<keyword id="KW-0862">Zinc</keyword>
<keyword id="KW-0863">Zinc-finger</keyword>
<feature type="chain" id="PRO_1000164233" description="Chaperone protein DnaJ">
    <location>
        <begin position="1"/>
        <end position="383"/>
    </location>
</feature>
<feature type="domain" description="J" evidence="1">
    <location>
        <begin position="5"/>
        <end position="70"/>
    </location>
</feature>
<feature type="repeat" description="CXXCXGXG motif">
    <location>
        <begin position="153"/>
        <end position="160"/>
    </location>
</feature>
<feature type="repeat" description="CXXCXGXG motif">
    <location>
        <begin position="171"/>
        <end position="178"/>
    </location>
</feature>
<feature type="repeat" description="CXXCXGXG motif">
    <location>
        <begin position="193"/>
        <end position="200"/>
    </location>
</feature>
<feature type="repeat" description="CXXCXGXG motif">
    <location>
        <begin position="207"/>
        <end position="214"/>
    </location>
</feature>
<feature type="zinc finger region" description="CR-type" evidence="1">
    <location>
        <begin position="140"/>
        <end position="219"/>
    </location>
</feature>
<feature type="binding site" evidence="1">
    <location>
        <position position="153"/>
    </location>
    <ligand>
        <name>Zn(2+)</name>
        <dbReference type="ChEBI" id="CHEBI:29105"/>
        <label>1</label>
    </ligand>
</feature>
<feature type="binding site" evidence="1">
    <location>
        <position position="156"/>
    </location>
    <ligand>
        <name>Zn(2+)</name>
        <dbReference type="ChEBI" id="CHEBI:29105"/>
        <label>1</label>
    </ligand>
</feature>
<feature type="binding site" evidence="1">
    <location>
        <position position="171"/>
    </location>
    <ligand>
        <name>Zn(2+)</name>
        <dbReference type="ChEBI" id="CHEBI:29105"/>
        <label>2</label>
    </ligand>
</feature>
<feature type="binding site" evidence="1">
    <location>
        <position position="174"/>
    </location>
    <ligand>
        <name>Zn(2+)</name>
        <dbReference type="ChEBI" id="CHEBI:29105"/>
        <label>2</label>
    </ligand>
</feature>
<feature type="binding site" evidence="1">
    <location>
        <position position="193"/>
    </location>
    <ligand>
        <name>Zn(2+)</name>
        <dbReference type="ChEBI" id="CHEBI:29105"/>
        <label>2</label>
    </ligand>
</feature>
<feature type="binding site" evidence="1">
    <location>
        <position position="196"/>
    </location>
    <ligand>
        <name>Zn(2+)</name>
        <dbReference type="ChEBI" id="CHEBI:29105"/>
        <label>2</label>
    </ligand>
</feature>
<feature type="binding site" evidence="1">
    <location>
        <position position="207"/>
    </location>
    <ligand>
        <name>Zn(2+)</name>
        <dbReference type="ChEBI" id="CHEBI:29105"/>
        <label>1</label>
    </ligand>
</feature>
<feature type="binding site" evidence="1">
    <location>
        <position position="210"/>
    </location>
    <ligand>
        <name>Zn(2+)</name>
        <dbReference type="ChEBI" id="CHEBI:29105"/>
        <label>1</label>
    </ligand>
</feature>
<accession>A5FZ18</accession>
<gene>
    <name evidence="1" type="primary">dnaJ</name>
    <name type="ordered locus">Acry_1645</name>
</gene>
<name>DNAJ_ACICJ</name>
<proteinExistence type="inferred from homology"/>
<organism>
    <name type="scientific">Acidiphilium cryptum (strain JF-5)</name>
    <dbReference type="NCBI Taxonomy" id="349163"/>
    <lineage>
        <taxon>Bacteria</taxon>
        <taxon>Pseudomonadati</taxon>
        <taxon>Pseudomonadota</taxon>
        <taxon>Alphaproteobacteria</taxon>
        <taxon>Acetobacterales</taxon>
        <taxon>Acidocellaceae</taxon>
        <taxon>Acidiphilium</taxon>
    </lineage>
</organism>